<comment type="function">
    <text evidence="2">Catalyzes the hydrolysis of N(4)-acetylcytidine (ac4C).</text>
</comment>
<comment type="catalytic activity">
    <reaction evidence="2">
        <text>N(4)-acetylcytidine + H2O = cytidine + acetate + H(+)</text>
        <dbReference type="Rhea" id="RHEA:62932"/>
        <dbReference type="ChEBI" id="CHEBI:15377"/>
        <dbReference type="ChEBI" id="CHEBI:15378"/>
        <dbReference type="ChEBI" id="CHEBI:17562"/>
        <dbReference type="ChEBI" id="CHEBI:30089"/>
        <dbReference type="ChEBI" id="CHEBI:70989"/>
        <dbReference type="EC" id="3.5.1.135"/>
    </reaction>
</comment>
<comment type="catalytic activity">
    <reaction evidence="2">
        <text>N(4)-acetyl-2'-deoxycytidine + H2O = 2'-deoxycytidine + acetate + H(+)</text>
        <dbReference type="Rhea" id="RHEA:62936"/>
        <dbReference type="ChEBI" id="CHEBI:15377"/>
        <dbReference type="ChEBI" id="CHEBI:15378"/>
        <dbReference type="ChEBI" id="CHEBI:15698"/>
        <dbReference type="ChEBI" id="CHEBI:30089"/>
        <dbReference type="ChEBI" id="CHEBI:146133"/>
        <dbReference type="EC" id="3.5.1.135"/>
    </reaction>
</comment>
<comment type="catalytic activity">
    <reaction evidence="2">
        <text>N(4)-acetylcytosine + H2O = cytosine + acetate + H(+)</text>
        <dbReference type="Rhea" id="RHEA:62940"/>
        <dbReference type="ChEBI" id="CHEBI:15377"/>
        <dbReference type="ChEBI" id="CHEBI:15378"/>
        <dbReference type="ChEBI" id="CHEBI:16040"/>
        <dbReference type="ChEBI" id="CHEBI:30089"/>
        <dbReference type="ChEBI" id="CHEBI:146134"/>
        <dbReference type="EC" id="3.5.1.135"/>
    </reaction>
</comment>
<comment type="similarity">
    <text evidence="2">Belongs to the N(4)-acetylcytidine amidohydrolase family.</text>
</comment>
<gene>
    <name type="primary">yqfB</name>
    <name type="ordered locus">ECS88_3180</name>
</gene>
<reference key="1">
    <citation type="journal article" date="2009" name="PLoS Genet.">
        <title>Organised genome dynamics in the Escherichia coli species results in highly diverse adaptive paths.</title>
        <authorList>
            <person name="Touchon M."/>
            <person name="Hoede C."/>
            <person name="Tenaillon O."/>
            <person name="Barbe V."/>
            <person name="Baeriswyl S."/>
            <person name="Bidet P."/>
            <person name="Bingen E."/>
            <person name="Bonacorsi S."/>
            <person name="Bouchier C."/>
            <person name="Bouvet O."/>
            <person name="Calteau A."/>
            <person name="Chiapello H."/>
            <person name="Clermont O."/>
            <person name="Cruveiller S."/>
            <person name="Danchin A."/>
            <person name="Diard M."/>
            <person name="Dossat C."/>
            <person name="Karoui M.E."/>
            <person name="Frapy E."/>
            <person name="Garry L."/>
            <person name="Ghigo J.M."/>
            <person name="Gilles A.M."/>
            <person name="Johnson J."/>
            <person name="Le Bouguenec C."/>
            <person name="Lescat M."/>
            <person name="Mangenot S."/>
            <person name="Martinez-Jehanne V."/>
            <person name="Matic I."/>
            <person name="Nassif X."/>
            <person name="Oztas S."/>
            <person name="Petit M.A."/>
            <person name="Pichon C."/>
            <person name="Rouy Z."/>
            <person name="Ruf C.S."/>
            <person name="Schneider D."/>
            <person name="Tourret J."/>
            <person name="Vacherie B."/>
            <person name="Vallenet D."/>
            <person name="Medigue C."/>
            <person name="Rocha E.P.C."/>
            <person name="Denamur E."/>
        </authorList>
    </citation>
    <scope>NUCLEOTIDE SEQUENCE [LARGE SCALE GENOMIC DNA]</scope>
    <source>
        <strain>S88 / ExPEC</strain>
    </source>
</reference>
<name>AC4CH_ECO45</name>
<proteinExistence type="inferred from homology"/>
<accession>B7MM87</accession>
<sequence length="103" mass="11963">MQPNDITFFQRFQDDILAGRKTITIRDESESHFKTGDVLRVGRFEDDGYFCTIEVTATSTVTLDTLTEKHAEQENMTLTELKKVIADIYPDQTQFYVIEFKCL</sequence>
<dbReference type="EC" id="3.5.1.135" evidence="2"/>
<dbReference type="EMBL" id="CU928161">
    <property type="protein sequence ID" value="CAR04416.1"/>
    <property type="molecule type" value="Genomic_DNA"/>
</dbReference>
<dbReference type="RefSeq" id="WP_001182956.1">
    <property type="nucleotide sequence ID" value="NC_011742.1"/>
</dbReference>
<dbReference type="SMR" id="B7MM87"/>
<dbReference type="KEGG" id="ecz:ECS88_3180"/>
<dbReference type="HOGENOM" id="CLU_152586_0_0_6"/>
<dbReference type="Proteomes" id="UP000000747">
    <property type="component" value="Chromosome"/>
</dbReference>
<dbReference type="GO" id="GO:0005829">
    <property type="term" value="C:cytosol"/>
    <property type="evidence" value="ECO:0007669"/>
    <property type="project" value="TreeGrafter"/>
</dbReference>
<dbReference type="GO" id="GO:0016813">
    <property type="term" value="F:hydrolase activity, acting on carbon-nitrogen (but not peptide) bonds, in linear amidines"/>
    <property type="evidence" value="ECO:0007669"/>
    <property type="project" value="UniProtKB-UniRule"/>
</dbReference>
<dbReference type="GO" id="GO:0106251">
    <property type="term" value="F:N4-acetylcytidine amidohydrolase activity"/>
    <property type="evidence" value="ECO:0007669"/>
    <property type="project" value="RHEA"/>
</dbReference>
<dbReference type="CDD" id="cd06552">
    <property type="entry name" value="ASCH_yqfb_like"/>
    <property type="match status" value="1"/>
</dbReference>
<dbReference type="FunFam" id="2.30.130.30:FF:000001">
    <property type="entry name" value="UPF0267 protein YqfB"/>
    <property type="match status" value="1"/>
</dbReference>
<dbReference type="Gene3D" id="2.30.130.30">
    <property type="entry name" value="Hypothetical protein"/>
    <property type="match status" value="1"/>
</dbReference>
<dbReference type="HAMAP" id="MF_00684">
    <property type="entry name" value="ac4C_amidohydr"/>
    <property type="match status" value="1"/>
</dbReference>
<dbReference type="InterPro" id="IPR008314">
    <property type="entry name" value="AC4CH"/>
</dbReference>
<dbReference type="InterPro" id="IPR007374">
    <property type="entry name" value="ASCH_domain"/>
</dbReference>
<dbReference type="InterPro" id="IPR015947">
    <property type="entry name" value="PUA-like_sf"/>
</dbReference>
<dbReference type="NCBIfam" id="NF003443">
    <property type="entry name" value="PRK04980.1"/>
    <property type="match status" value="1"/>
</dbReference>
<dbReference type="PANTHER" id="PTHR38088">
    <property type="entry name" value="UCP029143 FAMILY PROTEIN"/>
    <property type="match status" value="1"/>
</dbReference>
<dbReference type="PANTHER" id="PTHR38088:SF2">
    <property type="entry name" value="UCP029143 FAMILY PROTEIN"/>
    <property type="match status" value="1"/>
</dbReference>
<dbReference type="Pfam" id="PF04266">
    <property type="entry name" value="ASCH"/>
    <property type="match status" value="1"/>
</dbReference>
<dbReference type="PIRSF" id="PIRSF029143">
    <property type="entry name" value="UCP029143"/>
    <property type="match status" value="1"/>
</dbReference>
<dbReference type="SMART" id="SM01022">
    <property type="entry name" value="ASCH"/>
    <property type="match status" value="1"/>
</dbReference>
<dbReference type="SUPFAM" id="SSF88697">
    <property type="entry name" value="PUA domain-like"/>
    <property type="match status" value="1"/>
</dbReference>
<organism>
    <name type="scientific">Escherichia coli O45:K1 (strain S88 / ExPEC)</name>
    <dbReference type="NCBI Taxonomy" id="585035"/>
    <lineage>
        <taxon>Bacteria</taxon>
        <taxon>Pseudomonadati</taxon>
        <taxon>Pseudomonadota</taxon>
        <taxon>Gammaproteobacteria</taxon>
        <taxon>Enterobacterales</taxon>
        <taxon>Enterobacteriaceae</taxon>
        <taxon>Escherichia</taxon>
    </lineage>
</organism>
<evidence type="ECO:0000255" key="1"/>
<evidence type="ECO:0000255" key="2">
    <source>
        <dbReference type="HAMAP-Rule" id="MF_00684"/>
    </source>
</evidence>
<keyword id="KW-0378">Hydrolase</keyword>
<keyword id="KW-1185">Reference proteome</keyword>
<protein>
    <recommendedName>
        <fullName evidence="2">N(4)-acetylcytidine amidohydrolase</fullName>
        <shortName evidence="2">ac4C amidohydrolase</shortName>
        <ecNumber evidence="2">3.5.1.135</ecNumber>
    </recommendedName>
</protein>
<feature type="chain" id="PRO_1000131782" description="N(4)-acetylcytidine amidohydrolase">
    <location>
        <begin position="1"/>
        <end position="103"/>
    </location>
</feature>
<feature type="domain" description="ASCH" evidence="1">
    <location>
        <begin position="6"/>
        <end position="101"/>
    </location>
</feature>
<feature type="active site" description="Proton acceptor" evidence="2">
    <location>
        <position position="21"/>
    </location>
</feature>
<feature type="active site" description="Nucleophile" evidence="2">
    <location>
        <position position="24"/>
    </location>
</feature>
<feature type="active site" description="Proton donor" evidence="2">
    <location>
        <position position="74"/>
    </location>
</feature>